<proteinExistence type="evidence at protein level"/>
<name>TLCD1_CHICK</name>
<feature type="signal peptide" evidence="2">
    <location>
        <begin position="1"/>
        <end position="29"/>
    </location>
</feature>
<feature type="chain" id="PRO_0000429333" description="TLC domain-containing protein 1">
    <location>
        <begin position="30"/>
        <end position="252"/>
    </location>
</feature>
<feature type="topological domain" description="Extracellular" evidence="5">
    <location>
        <begin position="30"/>
        <end position="47"/>
    </location>
</feature>
<feature type="transmembrane region" description="Helical" evidence="2">
    <location>
        <begin position="48"/>
        <end position="68"/>
    </location>
</feature>
<feature type="topological domain" description="Cytoplasmic" evidence="5">
    <location>
        <begin position="69"/>
        <end position="84"/>
    </location>
</feature>
<feature type="transmembrane region" description="Helical" evidence="2">
    <location>
        <begin position="85"/>
        <end position="105"/>
    </location>
</feature>
<feature type="topological domain" description="Extracellular" evidence="5">
    <location>
        <begin position="106"/>
        <end position="124"/>
    </location>
</feature>
<feature type="intramembrane region" description="Helical" evidence="2">
    <location>
        <begin position="125"/>
        <end position="145"/>
    </location>
</feature>
<feature type="topological domain" description="Extracellular" evidence="5">
    <location>
        <begin position="146"/>
        <end position="174"/>
    </location>
</feature>
<feature type="transmembrane region" description="Helical" evidence="2">
    <location>
        <begin position="175"/>
        <end position="195"/>
    </location>
</feature>
<feature type="topological domain" description="Cytoplasmic" evidence="5">
    <location>
        <begin position="196"/>
        <end position="202"/>
    </location>
</feature>
<feature type="transmembrane region" description="Helical" evidence="2">
    <location>
        <begin position="203"/>
        <end position="223"/>
    </location>
</feature>
<feature type="topological domain" description="Extracellular" evidence="5">
    <location>
        <begin position="224"/>
        <end position="252"/>
    </location>
</feature>
<feature type="domain" description="TLC" evidence="3">
    <location>
        <begin position="41"/>
        <end position="235"/>
    </location>
</feature>
<evidence type="ECO:0000250" key="1">
    <source>
        <dbReference type="UniProtKB" id="Q96CP7"/>
    </source>
</evidence>
<evidence type="ECO:0000255" key="2"/>
<evidence type="ECO:0000255" key="3">
    <source>
        <dbReference type="PROSITE-ProRule" id="PRU00205"/>
    </source>
</evidence>
<evidence type="ECO:0000269" key="4">
    <source>
    </source>
</evidence>
<evidence type="ECO:0000305" key="5">
    <source>
    </source>
</evidence>
<protein>
    <recommendedName>
        <fullName>TLC domain-containing protein 1</fullName>
    </recommendedName>
    <alternativeName>
        <fullName>Calfacilitin</fullName>
    </alternativeName>
</protein>
<sequence>MGPGWRAPSAALVGGSVALFGALRRAALALPRPAAVRSRPGRVWRWRNLLVSFAHSVLAGLWALFSLWQSPELLSDIQDGYSVSGHLLVCFSSGYFIHDSLDIIFNQQSRSSWEYLVHHAMAISAFVSLIITGRFLVAAMLLLLVEVSNIFLTIRMLLKMSNVPSPALYEANKYVNLVMYFAFRLAPQVYLTWYFVRYVEVQGQGAFLMANLLLLDAMILMYFSRLLRSDFFPSLRKGSVGRDVDGEKFLID</sequence>
<dbReference type="EMBL" id="GQ504719">
    <property type="protein sequence ID" value="ADE62144.1"/>
    <property type="molecule type" value="mRNA"/>
</dbReference>
<dbReference type="EMBL" id="AADN03007719">
    <property type="status" value="NOT_ANNOTATED_CDS"/>
    <property type="molecule type" value="Genomic_DNA"/>
</dbReference>
<dbReference type="RefSeq" id="NP_001291994.1">
    <property type="nucleotide sequence ID" value="NM_001305065.2"/>
</dbReference>
<dbReference type="SMR" id="F1NZP5"/>
<dbReference type="FunCoup" id="F1NZP5">
    <property type="interactions" value="530"/>
</dbReference>
<dbReference type="STRING" id="9031.ENSGALP00000006318"/>
<dbReference type="PaxDb" id="9031-ENSGALP00000006318"/>
<dbReference type="Ensembl" id="ENSGALT00010070612.1">
    <property type="protein sequence ID" value="ENSGALP00010043303.1"/>
    <property type="gene ID" value="ENSGALG00010029219.1"/>
</dbReference>
<dbReference type="GeneID" id="417575"/>
<dbReference type="KEGG" id="gga:417575"/>
<dbReference type="CTD" id="116238"/>
<dbReference type="VEuPathDB" id="HostDB:geneid_417575"/>
<dbReference type="eggNOG" id="KOG4474">
    <property type="taxonomic scope" value="Eukaryota"/>
</dbReference>
<dbReference type="GeneTree" id="ENSGT01010000222313"/>
<dbReference type="HOGENOM" id="CLU_056440_2_1_1"/>
<dbReference type="InParanoid" id="F1NZP5"/>
<dbReference type="OMA" id="CAGQNGM"/>
<dbReference type="OrthoDB" id="10266980at2759"/>
<dbReference type="TreeFam" id="TF315115"/>
<dbReference type="PRO" id="PR:F1NZP5"/>
<dbReference type="Proteomes" id="UP000000539">
    <property type="component" value="Chromosome 19"/>
</dbReference>
<dbReference type="Bgee" id="ENSGALG00000003973">
    <property type="expression patterns" value="Expressed in lung and 12 other cell types or tissues"/>
</dbReference>
<dbReference type="GO" id="GO:0005886">
    <property type="term" value="C:plasma membrane"/>
    <property type="evidence" value="ECO:0000318"/>
    <property type="project" value="GO_Central"/>
</dbReference>
<dbReference type="GO" id="GO:0071709">
    <property type="term" value="P:membrane assembly"/>
    <property type="evidence" value="ECO:0000318"/>
    <property type="project" value="GO_Central"/>
</dbReference>
<dbReference type="GO" id="GO:0055091">
    <property type="term" value="P:phospholipid homeostasis"/>
    <property type="evidence" value="ECO:0000318"/>
    <property type="project" value="GO_Central"/>
</dbReference>
<dbReference type="GO" id="GO:0007009">
    <property type="term" value="P:plasma membrane organization"/>
    <property type="evidence" value="ECO:0000318"/>
    <property type="project" value="GO_Central"/>
</dbReference>
<dbReference type="GO" id="GO:0097035">
    <property type="term" value="P:regulation of membrane lipid distribution"/>
    <property type="evidence" value="ECO:0000318"/>
    <property type="project" value="GO_Central"/>
</dbReference>
<dbReference type="InterPro" id="IPR006634">
    <property type="entry name" value="TLC-dom"/>
</dbReference>
<dbReference type="InterPro" id="IPR050846">
    <property type="entry name" value="TLCD"/>
</dbReference>
<dbReference type="PANTHER" id="PTHR13439">
    <property type="entry name" value="CT120 PROTEIN"/>
    <property type="match status" value="1"/>
</dbReference>
<dbReference type="PANTHER" id="PTHR13439:SF5">
    <property type="entry name" value="TLC DOMAIN-CONTAINING PROTEIN 1"/>
    <property type="match status" value="1"/>
</dbReference>
<dbReference type="Pfam" id="PF03798">
    <property type="entry name" value="TRAM_LAG1_CLN8"/>
    <property type="match status" value="1"/>
</dbReference>
<dbReference type="SMART" id="SM00724">
    <property type="entry name" value="TLC"/>
    <property type="match status" value="1"/>
</dbReference>
<dbReference type="PROSITE" id="PS50922">
    <property type="entry name" value="TLC"/>
    <property type="match status" value="1"/>
</dbReference>
<gene>
    <name type="primary">TLCD1</name>
</gene>
<organism>
    <name type="scientific">Gallus gallus</name>
    <name type="common">Chicken</name>
    <dbReference type="NCBI Taxonomy" id="9031"/>
    <lineage>
        <taxon>Eukaryota</taxon>
        <taxon>Metazoa</taxon>
        <taxon>Chordata</taxon>
        <taxon>Craniata</taxon>
        <taxon>Vertebrata</taxon>
        <taxon>Euteleostomi</taxon>
        <taxon>Archelosauria</taxon>
        <taxon>Archosauria</taxon>
        <taxon>Dinosauria</taxon>
        <taxon>Saurischia</taxon>
        <taxon>Theropoda</taxon>
        <taxon>Coelurosauria</taxon>
        <taxon>Aves</taxon>
        <taxon>Neognathae</taxon>
        <taxon>Galloanserae</taxon>
        <taxon>Galliformes</taxon>
        <taxon>Phasianidae</taxon>
        <taxon>Phasianinae</taxon>
        <taxon>Gallus</taxon>
    </lineage>
</organism>
<accession>F1NZP5</accession>
<accession>F4Y5R7</accession>
<reference key="1">
    <citation type="journal article" date="2013" name="Nat. Commun.">
        <title>Calfacilitin is a calcium channel modulator essential for initiation of neural plate development.</title>
        <authorList>
            <person name="Papanayotou C."/>
            <person name="De Almeida I."/>
            <person name="Liao P."/>
            <person name="Oliveira N.M."/>
            <person name="Lu S.Q."/>
            <person name="Kougioumtzidou E."/>
            <person name="Zhu L."/>
            <person name="Shaw A."/>
            <person name="Sheng G."/>
            <person name="Streit A."/>
            <person name="Yu D."/>
            <person name="Wah Soong T."/>
            <person name="Stern C.D."/>
        </authorList>
    </citation>
    <scope>NUCLEOTIDE SEQUENCE [MRNA]</scope>
    <scope>INTERACTION WITH CACNA1C</scope>
    <scope>SUBCELLULAR LOCATION</scope>
    <scope>TOPOLOGY</scope>
</reference>
<reference key="2">
    <citation type="journal article" date="2004" name="Nature">
        <title>Sequence and comparative analysis of the chicken genome provide unique perspectives on vertebrate evolution.</title>
        <authorList>
            <person name="Hillier L.W."/>
            <person name="Miller W."/>
            <person name="Birney E."/>
            <person name="Warren W."/>
            <person name="Hardison R.C."/>
            <person name="Ponting C.P."/>
            <person name="Bork P."/>
            <person name="Burt D.W."/>
            <person name="Groenen M.A.M."/>
            <person name="Delany M.E."/>
            <person name="Dodgson J.B."/>
            <person name="Chinwalla A.T."/>
            <person name="Cliften P.F."/>
            <person name="Clifton S.W."/>
            <person name="Delehaunty K.D."/>
            <person name="Fronick C."/>
            <person name="Fulton R.S."/>
            <person name="Graves T.A."/>
            <person name="Kremitzki C."/>
            <person name="Layman D."/>
            <person name="Magrini V."/>
            <person name="McPherson J.D."/>
            <person name="Miner T.L."/>
            <person name="Minx P."/>
            <person name="Nash W.E."/>
            <person name="Nhan M.N."/>
            <person name="Nelson J.O."/>
            <person name="Oddy L.G."/>
            <person name="Pohl C.S."/>
            <person name="Randall-Maher J."/>
            <person name="Smith S.M."/>
            <person name="Wallis J.W."/>
            <person name="Yang S.-P."/>
            <person name="Romanov M.N."/>
            <person name="Rondelli C.M."/>
            <person name="Paton B."/>
            <person name="Smith J."/>
            <person name="Morrice D."/>
            <person name="Daniels L."/>
            <person name="Tempest H.G."/>
            <person name="Robertson L."/>
            <person name="Masabanda J.S."/>
            <person name="Griffin D.K."/>
            <person name="Vignal A."/>
            <person name="Fillon V."/>
            <person name="Jacobbson L."/>
            <person name="Kerje S."/>
            <person name="Andersson L."/>
            <person name="Crooijmans R.P."/>
            <person name="Aerts J."/>
            <person name="van der Poel J.J."/>
            <person name="Ellegren H."/>
            <person name="Caldwell R.B."/>
            <person name="Hubbard S.J."/>
            <person name="Grafham D.V."/>
            <person name="Kierzek A.M."/>
            <person name="McLaren S.R."/>
            <person name="Overton I.M."/>
            <person name="Arakawa H."/>
            <person name="Beattie K.J."/>
            <person name="Bezzubov Y."/>
            <person name="Boardman P.E."/>
            <person name="Bonfield J.K."/>
            <person name="Croning M.D.R."/>
            <person name="Davies R.M."/>
            <person name="Francis M.D."/>
            <person name="Humphray S.J."/>
            <person name="Scott C.E."/>
            <person name="Taylor R.G."/>
            <person name="Tickle C."/>
            <person name="Brown W.R.A."/>
            <person name="Rogers J."/>
            <person name="Buerstedde J.-M."/>
            <person name="Wilson S.A."/>
            <person name="Stubbs L."/>
            <person name="Ovcharenko I."/>
            <person name="Gordon L."/>
            <person name="Lucas S."/>
            <person name="Miller M.M."/>
            <person name="Inoko H."/>
            <person name="Shiina T."/>
            <person name="Kaufman J."/>
            <person name="Salomonsen J."/>
            <person name="Skjoedt K."/>
            <person name="Wong G.K.-S."/>
            <person name="Wang J."/>
            <person name="Liu B."/>
            <person name="Wang J."/>
            <person name="Yu J."/>
            <person name="Yang H."/>
            <person name="Nefedov M."/>
            <person name="Koriabine M."/>
            <person name="Dejong P.J."/>
            <person name="Goodstadt L."/>
            <person name="Webber C."/>
            <person name="Dickens N.J."/>
            <person name="Letunic I."/>
            <person name="Suyama M."/>
            <person name="Torrents D."/>
            <person name="von Mering C."/>
            <person name="Zdobnov E.M."/>
            <person name="Makova K."/>
            <person name="Nekrutenko A."/>
            <person name="Elnitski L."/>
            <person name="Eswara P."/>
            <person name="King D.C."/>
            <person name="Yang S.-P."/>
            <person name="Tyekucheva S."/>
            <person name="Radakrishnan A."/>
            <person name="Harris R.S."/>
            <person name="Chiaromonte F."/>
            <person name="Taylor J."/>
            <person name="He J."/>
            <person name="Rijnkels M."/>
            <person name="Griffiths-Jones S."/>
            <person name="Ureta-Vidal A."/>
            <person name="Hoffman M.M."/>
            <person name="Severin J."/>
            <person name="Searle S.M.J."/>
            <person name="Law A.S."/>
            <person name="Speed D."/>
            <person name="Waddington D."/>
            <person name="Cheng Z."/>
            <person name="Tuzun E."/>
            <person name="Eichler E."/>
            <person name="Bao Z."/>
            <person name="Flicek P."/>
            <person name="Shteynberg D.D."/>
            <person name="Brent M.R."/>
            <person name="Bye J.M."/>
            <person name="Huckle E.J."/>
            <person name="Chatterji S."/>
            <person name="Dewey C."/>
            <person name="Pachter L."/>
            <person name="Kouranov A."/>
            <person name="Mourelatos Z."/>
            <person name="Hatzigeorgiou A.G."/>
            <person name="Paterson A.H."/>
            <person name="Ivarie R."/>
            <person name="Brandstrom M."/>
            <person name="Axelsson E."/>
            <person name="Backstrom N."/>
            <person name="Berlin S."/>
            <person name="Webster M.T."/>
            <person name="Pourquie O."/>
            <person name="Reymond A."/>
            <person name="Ucla C."/>
            <person name="Antonarakis S.E."/>
            <person name="Long M."/>
            <person name="Emerson J.J."/>
            <person name="Betran E."/>
            <person name="Dupanloup I."/>
            <person name="Kaessmann H."/>
            <person name="Hinrichs A.S."/>
            <person name="Bejerano G."/>
            <person name="Furey T.S."/>
            <person name="Harte R.A."/>
            <person name="Raney B."/>
            <person name="Siepel A."/>
            <person name="Kent W.J."/>
            <person name="Haussler D."/>
            <person name="Eyras E."/>
            <person name="Castelo R."/>
            <person name="Abril J.F."/>
            <person name="Castellano S."/>
            <person name="Camara F."/>
            <person name="Parra G."/>
            <person name="Guigo R."/>
            <person name="Bourque G."/>
            <person name="Tesler G."/>
            <person name="Pevzner P.A."/>
            <person name="Smit A."/>
            <person name="Fulton L.A."/>
            <person name="Mardis E.R."/>
            <person name="Wilson R.K."/>
        </authorList>
    </citation>
    <scope>NUCLEOTIDE SEQUENCE [LARGE SCALE GENOMIC DNA]</scope>
    <source>
        <strain>Red jungle fowl</strain>
    </source>
</reference>
<keyword id="KW-1003">Cell membrane</keyword>
<keyword id="KW-0472">Membrane</keyword>
<keyword id="KW-1185">Reference proteome</keyword>
<keyword id="KW-0732">Signal</keyword>
<keyword id="KW-0812">Transmembrane</keyword>
<keyword id="KW-1133">Transmembrane helix</keyword>
<comment type="function">
    <text evidence="1">Regulates the composition and fluidity of the plasma membrane (By similarity). Inhibits the incorporation of membrane-fluidizing phospholipids containing omega-3 long-chain polyunsaturated fatty acids (LCPUFA) and thereby promotes membrane rigidity (By similarity). Does not appear to have any effect on LCPUFA synthesis (By similarity).</text>
</comment>
<comment type="subunit">
    <text evidence="4">Interacts with CACNA1C in vitro; however the relevance of the interaction in vivo is unclear.</text>
</comment>
<comment type="subcellular location">
    <subcellularLocation>
        <location evidence="4">Cell membrane</location>
        <topology evidence="4">Multi-pass membrane protein</topology>
    </subcellularLocation>
</comment>
<comment type="caution">
    <text evidence="1 4">Was originally proposed to be a calcium channel facilitator (PubMed:23673622). However, a more recent study shows that this protein regulates membrane phospholipid homeostasis (By similarity). Therefore, any effects on calcium flux are most likely a secondary consequence of defects in membrane composition or fluidity (By similarity).</text>
</comment>